<gene>
    <name evidence="1" type="primary">ulaR</name>
    <name type="ordered locus">SARI_03253</name>
</gene>
<comment type="function">
    <text evidence="1">Represses ulaG and the ulaABCDEF operon.</text>
</comment>
<comment type="subcellular location">
    <subcellularLocation>
        <location evidence="1">Cytoplasm</location>
    </subcellularLocation>
</comment>
<keyword id="KW-0963">Cytoplasm</keyword>
<keyword id="KW-0238">DNA-binding</keyword>
<keyword id="KW-1185">Reference proteome</keyword>
<keyword id="KW-0678">Repressor</keyword>
<keyword id="KW-0804">Transcription</keyword>
<keyword id="KW-0805">Transcription regulation</keyword>
<organism>
    <name type="scientific">Salmonella arizonae (strain ATCC BAA-731 / CDC346-86 / RSK2980)</name>
    <dbReference type="NCBI Taxonomy" id="41514"/>
    <lineage>
        <taxon>Bacteria</taxon>
        <taxon>Pseudomonadati</taxon>
        <taxon>Pseudomonadota</taxon>
        <taxon>Gammaproteobacteria</taxon>
        <taxon>Enterobacterales</taxon>
        <taxon>Enterobacteriaceae</taxon>
        <taxon>Salmonella</taxon>
    </lineage>
</organism>
<dbReference type="EMBL" id="CP000880">
    <property type="protein sequence ID" value="ABX23089.1"/>
    <property type="molecule type" value="Genomic_DNA"/>
</dbReference>
<dbReference type="SMR" id="A9MFM3"/>
<dbReference type="STRING" id="41514.SARI_03253"/>
<dbReference type="KEGG" id="ses:SARI_03253"/>
<dbReference type="HOGENOM" id="CLU_060699_3_2_6"/>
<dbReference type="Proteomes" id="UP000002084">
    <property type="component" value="Chromosome"/>
</dbReference>
<dbReference type="GO" id="GO:0005737">
    <property type="term" value="C:cytoplasm"/>
    <property type="evidence" value="ECO:0007669"/>
    <property type="project" value="UniProtKB-SubCell"/>
</dbReference>
<dbReference type="GO" id="GO:0003677">
    <property type="term" value="F:DNA binding"/>
    <property type="evidence" value="ECO:0007669"/>
    <property type="project" value="UniProtKB-KW"/>
</dbReference>
<dbReference type="GO" id="GO:0003700">
    <property type="term" value="F:DNA-binding transcription factor activity"/>
    <property type="evidence" value="ECO:0007669"/>
    <property type="project" value="InterPro"/>
</dbReference>
<dbReference type="GO" id="GO:0045892">
    <property type="term" value="P:negative regulation of DNA-templated transcription"/>
    <property type="evidence" value="ECO:0007669"/>
    <property type="project" value="UniProtKB-UniRule"/>
</dbReference>
<dbReference type="FunFam" id="1.10.10.10:FF:000160">
    <property type="entry name" value="HTH-type transcriptional regulator UlaR"/>
    <property type="match status" value="1"/>
</dbReference>
<dbReference type="Gene3D" id="1.10.10.10">
    <property type="entry name" value="Winged helix-like DNA-binding domain superfamily/Winged helix DNA-binding domain"/>
    <property type="match status" value="1"/>
</dbReference>
<dbReference type="HAMAP" id="MF_01563">
    <property type="entry name" value="HTH_type_UlaR"/>
    <property type="match status" value="1"/>
</dbReference>
<dbReference type="InterPro" id="IPR050313">
    <property type="entry name" value="Carb_Metab_HTH_regulators"/>
</dbReference>
<dbReference type="InterPro" id="IPR014036">
    <property type="entry name" value="DeoR-like_C"/>
</dbReference>
<dbReference type="InterPro" id="IPR001034">
    <property type="entry name" value="DeoR_HTH"/>
</dbReference>
<dbReference type="InterPro" id="IPR037171">
    <property type="entry name" value="NagB/RpiA_transferase-like"/>
</dbReference>
<dbReference type="InterPro" id="IPR018356">
    <property type="entry name" value="Tscrpt_reg_HTH_DeoR_CS"/>
</dbReference>
<dbReference type="InterPro" id="IPR023711">
    <property type="entry name" value="Tscrpt_reg_HTH_UlaR"/>
</dbReference>
<dbReference type="InterPro" id="IPR036388">
    <property type="entry name" value="WH-like_DNA-bd_sf"/>
</dbReference>
<dbReference type="InterPro" id="IPR036390">
    <property type="entry name" value="WH_DNA-bd_sf"/>
</dbReference>
<dbReference type="NCBIfam" id="NF010034">
    <property type="entry name" value="PRK13509.1"/>
    <property type="match status" value="1"/>
</dbReference>
<dbReference type="PANTHER" id="PTHR30363">
    <property type="entry name" value="HTH-TYPE TRANSCRIPTIONAL REGULATOR SRLR-RELATED"/>
    <property type="match status" value="1"/>
</dbReference>
<dbReference type="PANTHER" id="PTHR30363:SF55">
    <property type="entry name" value="HTH-TYPE TRANSCRIPTIONAL REGULATOR ULAR"/>
    <property type="match status" value="1"/>
</dbReference>
<dbReference type="Pfam" id="PF00455">
    <property type="entry name" value="DeoRC"/>
    <property type="match status" value="1"/>
</dbReference>
<dbReference type="Pfam" id="PF08220">
    <property type="entry name" value="HTH_DeoR"/>
    <property type="match status" value="1"/>
</dbReference>
<dbReference type="PRINTS" id="PR00037">
    <property type="entry name" value="HTHLACR"/>
</dbReference>
<dbReference type="SMART" id="SM01134">
    <property type="entry name" value="DeoRC"/>
    <property type="match status" value="1"/>
</dbReference>
<dbReference type="SMART" id="SM00420">
    <property type="entry name" value="HTH_DEOR"/>
    <property type="match status" value="1"/>
</dbReference>
<dbReference type="SUPFAM" id="SSF100950">
    <property type="entry name" value="NagB/RpiA/CoA transferase-like"/>
    <property type="match status" value="1"/>
</dbReference>
<dbReference type="SUPFAM" id="SSF46785">
    <property type="entry name" value="Winged helix' DNA-binding domain"/>
    <property type="match status" value="1"/>
</dbReference>
<dbReference type="PROSITE" id="PS00894">
    <property type="entry name" value="HTH_DEOR_1"/>
    <property type="match status" value="1"/>
</dbReference>
<dbReference type="PROSITE" id="PS51000">
    <property type="entry name" value="HTH_DEOR_2"/>
    <property type="match status" value="1"/>
</dbReference>
<protein>
    <recommendedName>
        <fullName evidence="1">HTH-type transcriptional regulator UlaR</fullName>
    </recommendedName>
</protein>
<accession>A9MFM3</accession>
<name>ULAR_SALAR</name>
<feature type="chain" id="PRO_1000087816" description="HTH-type transcriptional regulator UlaR">
    <location>
        <begin position="1"/>
        <end position="251"/>
    </location>
</feature>
<feature type="domain" description="HTH deoR-type" evidence="1">
    <location>
        <begin position="3"/>
        <end position="58"/>
    </location>
</feature>
<feature type="DNA-binding region" description="H-T-H motif" evidence="1">
    <location>
        <begin position="20"/>
        <end position="39"/>
    </location>
</feature>
<proteinExistence type="inferred from homology"/>
<sequence length="251" mass="27546">MTEAQRHQILLDMLAQLGFVTVENVIERLGISPATARRDINKLDESGKLKKVRNGAEAITQQRPRWTPMNLHQAQNHDEKVRIAKAASQLVNPGESVVINCGSTAFLLGREMCGKPVQIITNYLPLANYLIDQEHESVIIMGGQYNKSQSITLSPQGSENSLYAGHWMFTSGKGLTADGLYKTDMLTAMAEQKMLSVVGKLVALVDSSKIGERAGMLFSRADQIDMLITGKNANPEVLQQLEAQGVSILRV</sequence>
<evidence type="ECO:0000255" key="1">
    <source>
        <dbReference type="HAMAP-Rule" id="MF_01563"/>
    </source>
</evidence>
<reference key="1">
    <citation type="submission" date="2007-11" db="EMBL/GenBank/DDBJ databases">
        <authorList>
            <consortium name="The Salmonella enterica serovar Arizonae Genome Sequencing Project"/>
            <person name="McClelland M."/>
            <person name="Sanderson E.K."/>
            <person name="Porwollik S."/>
            <person name="Spieth J."/>
            <person name="Clifton W.S."/>
            <person name="Fulton R."/>
            <person name="Chunyan W."/>
            <person name="Wollam A."/>
            <person name="Shah N."/>
            <person name="Pepin K."/>
            <person name="Bhonagiri V."/>
            <person name="Nash W."/>
            <person name="Johnson M."/>
            <person name="Thiruvilangam P."/>
            <person name="Wilson R."/>
        </authorList>
    </citation>
    <scope>NUCLEOTIDE SEQUENCE [LARGE SCALE GENOMIC DNA]</scope>
    <source>
        <strain>ATCC BAA-731 / CDC346-86 / RSK2980</strain>
    </source>
</reference>